<gene>
    <name evidence="1" type="primary">lipA</name>
    <name type="ordered locus">BR1124</name>
    <name type="ordered locus">BS1330_I1120</name>
</gene>
<feature type="chain" id="PRO_0000102296" description="Lipoyl synthase">
    <location>
        <begin position="1"/>
        <end position="322"/>
    </location>
</feature>
<feature type="domain" description="Radical SAM core" evidence="2">
    <location>
        <begin position="72"/>
        <end position="288"/>
    </location>
</feature>
<feature type="region of interest" description="Disordered" evidence="3">
    <location>
        <begin position="1"/>
        <end position="22"/>
    </location>
</feature>
<feature type="compositionally biased region" description="Polar residues" evidence="3">
    <location>
        <begin position="1"/>
        <end position="12"/>
    </location>
</feature>
<feature type="binding site" evidence="1">
    <location>
        <position position="60"/>
    </location>
    <ligand>
        <name>[4Fe-4S] cluster</name>
        <dbReference type="ChEBI" id="CHEBI:49883"/>
        <label>1</label>
    </ligand>
</feature>
<feature type="binding site" evidence="1">
    <location>
        <position position="65"/>
    </location>
    <ligand>
        <name>[4Fe-4S] cluster</name>
        <dbReference type="ChEBI" id="CHEBI:49883"/>
        <label>1</label>
    </ligand>
</feature>
<feature type="binding site" evidence="1">
    <location>
        <position position="71"/>
    </location>
    <ligand>
        <name>[4Fe-4S] cluster</name>
        <dbReference type="ChEBI" id="CHEBI:49883"/>
        <label>1</label>
    </ligand>
</feature>
<feature type="binding site" evidence="1">
    <location>
        <position position="86"/>
    </location>
    <ligand>
        <name>[4Fe-4S] cluster</name>
        <dbReference type="ChEBI" id="CHEBI:49883"/>
        <label>2</label>
        <note>4Fe-4S-S-AdoMet</note>
    </ligand>
</feature>
<feature type="binding site" evidence="1">
    <location>
        <position position="90"/>
    </location>
    <ligand>
        <name>[4Fe-4S] cluster</name>
        <dbReference type="ChEBI" id="CHEBI:49883"/>
        <label>2</label>
        <note>4Fe-4S-S-AdoMet</note>
    </ligand>
</feature>
<feature type="binding site" evidence="1">
    <location>
        <position position="93"/>
    </location>
    <ligand>
        <name>[4Fe-4S] cluster</name>
        <dbReference type="ChEBI" id="CHEBI:49883"/>
        <label>2</label>
        <note>4Fe-4S-S-AdoMet</note>
    </ligand>
</feature>
<feature type="binding site" evidence="1">
    <location>
        <position position="299"/>
    </location>
    <ligand>
        <name>[4Fe-4S] cluster</name>
        <dbReference type="ChEBI" id="CHEBI:49883"/>
        <label>1</label>
    </ligand>
</feature>
<comment type="function">
    <text evidence="1">Catalyzes the radical-mediated insertion of two sulfur atoms into the C-6 and C-8 positions of the octanoyl moiety bound to the lipoyl domains of lipoate-dependent enzymes, thereby converting the octanoylated domains into lipoylated derivatives.</text>
</comment>
<comment type="catalytic activity">
    <reaction evidence="1">
        <text>[[Fe-S] cluster scaffold protein carrying a second [4Fe-4S](2+) cluster] + N(6)-octanoyl-L-lysyl-[protein] + 2 oxidized [2Fe-2S]-[ferredoxin] + 2 S-adenosyl-L-methionine + 4 H(+) = [[Fe-S] cluster scaffold protein] + N(6)-[(R)-dihydrolipoyl]-L-lysyl-[protein] + 4 Fe(3+) + 2 hydrogen sulfide + 2 5'-deoxyadenosine + 2 L-methionine + 2 reduced [2Fe-2S]-[ferredoxin]</text>
        <dbReference type="Rhea" id="RHEA:16585"/>
        <dbReference type="Rhea" id="RHEA-COMP:9928"/>
        <dbReference type="Rhea" id="RHEA-COMP:10000"/>
        <dbReference type="Rhea" id="RHEA-COMP:10001"/>
        <dbReference type="Rhea" id="RHEA-COMP:10475"/>
        <dbReference type="Rhea" id="RHEA-COMP:14568"/>
        <dbReference type="Rhea" id="RHEA-COMP:14569"/>
        <dbReference type="ChEBI" id="CHEBI:15378"/>
        <dbReference type="ChEBI" id="CHEBI:17319"/>
        <dbReference type="ChEBI" id="CHEBI:29034"/>
        <dbReference type="ChEBI" id="CHEBI:29919"/>
        <dbReference type="ChEBI" id="CHEBI:33722"/>
        <dbReference type="ChEBI" id="CHEBI:33737"/>
        <dbReference type="ChEBI" id="CHEBI:33738"/>
        <dbReference type="ChEBI" id="CHEBI:57844"/>
        <dbReference type="ChEBI" id="CHEBI:59789"/>
        <dbReference type="ChEBI" id="CHEBI:78809"/>
        <dbReference type="ChEBI" id="CHEBI:83100"/>
        <dbReference type="EC" id="2.8.1.8"/>
    </reaction>
</comment>
<comment type="cofactor">
    <cofactor evidence="1">
        <name>[4Fe-4S] cluster</name>
        <dbReference type="ChEBI" id="CHEBI:49883"/>
    </cofactor>
    <text evidence="1">Binds 2 [4Fe-4S] clusters per subunit. One cluster is coordinated with 3 cysteines and an exchangeable S-adenosyl-L-methionine.</text>
</comment>
<comment type="pathway">
    <text evidence="1">Protein modification; protein lipoylation via endogenous pathway; protein N(6)-(lipoyl)lysine from octanoyl-[acyl-carrier-protein]: step 2/2.</text>
</comment>
<comment type="subcellular location">
    <subcellularLocation>
        <location evidence="1">Cytoplasm</location>
    </subcellularLocation>
</comment>
<comment type="similarity">
    <text evidence="1">Belongs to the radical SAM superfamily. Lipoyl synthase family.</text>
</comment>
<protein>
    <recommendedName>
        <fullName evidence="1">Lipoyl synthase</fullName>
        <ecNumber evidence="1">2.8.1.8</ecNumber>
    </recommendedName>
    <alternativeName>
        <fullName evidence="1">Lip-syn</fullName>
        <shortName evidence="1">LS</shortName>
    </alternativeName>
    <alternativeName>
        <fullName evidence="1">Lipoate synthase</fullName>
    </alternativeName>
    <alternativeName>
        <fullName evidence="1">Lipoic acid synthase</fullName>
    </alternativeName>
    <alternativeName>
        <fullName evidence="1">Sulfur insertion protein LipA</fullName>
    </alternativeName>
</protein>
<name>LIPA_BRUSU</name>
<accession>P65282</accession>
<accession>G0KA46</accession>
<accession>Q8YHE2</accession>
<evidence type="ECO:0000255" key="1">
    <source>
        <dbReference type="HAMAP-Rule" id="MF_00206"/>
    </source>
</evidence>
<evidence type="ECO:0000255" key="2">
    <source>
        <dbReference type="PROSITE-ProRule" id="PRU01266"/>
    </source>
</evidence>
<evidence type="ECO:0000256" key="3">
    <source>
        <dbReference type="SAM" id="MobiDB-lite"/>
    </source>
</evidence>
<keyword id="KW-0004">4Fe-4S</keyword>
<keyword id="KW-0963">Cytoplasm</keyword>
<keyword id="KW-0408">Iron</keyword>
<keyword id="KW-0411">Iron-sulfur</keyword>
<keyword id="KW-0479">Metal-binding</keyword>
<keyword id="KW-0949">S-adenosyl-L-methionine</keyword>
<keyword id="KW-0808">Transferase</keyword>
<sequence>MVTVLNTVNQSGRLRHPEKAHRPDNEVLKKPDWIRVKAPVSRGYGETREIVRSNKLVTVCEEAGCPNIGECWEKKHATFMIMGEICTRACAFCNISTGIPNALDPNEPENIAKAVKQMGLTHVVITSVDRDDLADGGAHHFAEVIKAVREAAPATTIEILTPDFLRKEGALEIVVKARPDVFNHNLETVPSKYLKVRPGARYFHSIRLLQRVKELDPTIFTKSGIMVGLGEERNEILQLMDDLRSADVDFMTIGQYLQPTRKHHPVIRFVKPDEFKSFETIGKTKGFLLVASSPLTRSSHHAGEDFAKLKAAREALYASRAS</sequence>
<organism>
    <name type="scientific">Brucella suis biovar 1 (strain 1330)</name>
    <dbReference type="NCBI Taxonomy" id="204722"/>
    <lineage>
        <taxon>Bacteria</taxon>
        <taxon>Pseudomonadati</taxon>
        <taxon>Pseudomonadota</taxon>
        <taxon>Alphaproteobacteria</taxon>
        <taxon>Hyphomicrobiales</taxon>
        <taxon>Brucellaceae</taxon>
        <taxon>Brucella/Ochrobactrum group</taxon>
        <taxon>Brucella</taxon>
    </lineage>
</organism>
<reference key="1">
    <citation type="journal article" date="2002" name="Proc. Natl. Acad. Sci. U.S.A.">
        <title>The Brucella suis genome reveals fundamental similarities between animal and plant pathogens and symbionts.</title>
        <authorList>
            <person name="Paulsen I.T."/>
            <person name="Seshadri R."/>
            <person name="Nelson K.E."/>
            <person name="Eisen J.A."/>
            <person name="Heidelberg J.F."/>
            <person name="Read T.D."/>
            <person name="Dodson R.J."/>
            <person name="Umayam L.A."/>
            <person name="Brinkac L.M."/>
            <person name="Beanan M.J."/>
            <person name="Daugherty S.C."/>
            <person name="DeBoy R.T."/>
            <person name="Durkin A.S."/>
            <person name="Kolonay J.F."/>
            <person name="Madupu R."/>
            <person name="Nelson W.C."/>
            <person name="Ayodeji B."/>
            <person name="Kraul M."/>
            <person name="Shetty J."/>
            <person name="Malek J.A."/>
            <person name="Van Aken S.E."/>
            <person name="Riedmuller S."/>
            <person name="Tettelin H."/>
            <person name="Gill S.R."/>
            <person name="White O."/>
            <person name="Salzberg S.L."/>
            <person name="Hoover D.L."/>
            <person name="Lindler L.E."/>
            <person name="Halling S.M."/>
            <person name="Boyle S.M."/>
            <person name="Fraser C.M."/>
        </authorList>
    </citation>
    <scope>NUCLEOTIDE SEQUENCE [LARGE SCALE GENOMIC DNA]</scope>
    <source>
        <strain>1330</strain>
    </source>
</reference>
<reference key="2">
    <citation type="journal article" date="2011" name="J. Bacteriol.">
        <title>Revised genome sequence of Brucella suis 1330.</title>
        <authorList>
            <person name="Tae H."/>
            <person name="Shallom S."/>
            <person name="Settlage R."/>
            <person name="Preston D."/>
            <person name="Adams L.G."/>
            <person name="Garner H.R."/>
        </authorList>
    </citation>
    <scope>NUCLEOTIDE SEQUENCE [LARGE SCALE GENOMIC DNA]</scope>
    <source>
        <strain>1330</strain>
    </source>
</reference>
<proteinExistence type="inferred from homology"/>
<dbReference type="EC" id="2.8.1.8" evidence="1"/>
<dbReference type="EMBL" id="AE014291">
    <property type="protein sequence ID" value="AAN30044.1"/>
    <property type="molecule type" value="Genomic_DNA"/>
</dbReference>
<dbReference type="EMBL" id="CP002997">
    <property type="protein sequence ID" value="AEM18462.1"/>
    <property type="molecule type" value="Genomic_DNA"/>
</dbReference>
<dbReference type="RefSeq" id="WP_002964253.1">
    <property type="nucleotide sequence ID" value="NZ_KN046804.1"/>
</dbReference>
<dbReference type="SMR" id="P65282"/>
<dbReference type="GeneID" id="97533623"/>
<dbReference type="KEGG" id="bms:BR1124"/>
<dbReference type="KEGG" id="bsi:BS1330_I1120"/>
<dbReference type="PATRIC" id="fig|204722.21.peg.2161"/>
<dbReference type="HOGENOM" id="CLU_033144_2_1_5"/>
<dbReference type="PhylomeDB" id="P65282"/>
<dbReference type="UniPathway" id="UPA00538">
    <property type="reaction ID" value="UER00593"/>
</dbReference>
<dbReference type="Proteomes" id="UP000007104">
    <property type="component" value="Chromosome I"/>
</dbReference>
<dbReference type="GO" id="GO:0005737">
    <property type="term" value="C:cytoplasm"/>
    <property type="evidence" value="ECO:0007669"/>
    <property type="project" value="UniProtKB-SubCell"/>
</dbReference>
<dbReference type="GO" id="GO:0051539">
    <property type="term" value="F:4 iron, 4 sulfur cluster binding"/>
    <property type="evidence" value="ECO:0007669"/>
    <property type="project" value="UniProtKB-UniRule"/>
</dbReference>
<dbReference type="GO" id="GO:0016992">
    <property type="term" value="F:lipoate synthase activity"/>
    <property type="evidence" value="ECO:0007669"/>
    <property type="project" value="UniProtKB-UniRule"/>
</dbReference>
<dbReference type="GO" id="GO:0046872">
    <property type="term" value="F:metal ion binding"/>
    <property type="evidence" value="ECO:0007669"/>
    <property type="project" value="UniProtKB-KW"/>
</dbReference>
<dbReference type="CDD" id="cd01335">
    <property type="entry name" value="Radical_SAM"/>
    <property type="match status" value="1"/>
</dbReference>
<dbReference type="FunFam" id="3.20.20.70:FF:000040">
    <property type="entry name" value="Lipoyl synthase"/>
    <property type="match status" value="1"/>
</dbReference>
<dbReference type="Gene3D" id="3.20.20.70">
    <property type="entry name" value="Aldolase class I"/>
    <property type="match status" value="1"/>
</dbReference>
<dbReference type="HAMAP" id="MF_00206">
    <property type="entry name" value="Lipoyl_synth"/>
    <property type="match status" value="1"/>
</dbReference>
<dbReference type="InterPro" id="IPR013785">
    <property type="entry name" value="Aldolase_TIM"/>
</dbReference>
<dbReference type="InterPro" id="IPR006638">
    <property type="entry name" value="Elp3/MiaA/NifB-like_rSAM"/>
</dbReference>
<dbReference type="InterPro" id="IPR031691">
    <property type="entry name" value="LIAS_N"/>
</dbReference>
<dbReference type="InterPro" id="IPR003698">
    <property type="entry name" value="Lipoyl_synth"/>
</dbReference>
<dbReference type="InterPro" id="IPR007197">
    <property type="entry name" value="rSAM"/>
</dbReference>
<dbReference type="NCBIfam" id="TIGR00510">
    <property type="entry name" value="lipA"/>
    <property type="match status" value="1"/>
</dbReference>
<dbReference type="NCBIfam" id="NF004019">
    <property type="entry name" value="PRK05481.1"/>
    <property type="match status" value="1"/>
</dbReference>
<dbReference type="NCBIfam" id="NF009544">
    <property type="entry name" value="PRK12928.1"/>
    <property type="match status" value="1"/>
</dbReference>
<dbReference type="PANTHER" id="PTHR10949">
    <property type="entry name" value="LIPOYL SYNTHASE"/>
    <property type="match status" value="1"/>
</dbReference>
<dbReference type="PANTHER" id="PTHR10949:SF0">
    <property type="entry name" value="LIPOYL SYNTHASE, MITOCHONDRIAL"/>
    <property type="match status" value="1"/>
</dbReference>
<dbReference type="Pfam" id="PF16881">
    <property type="entry name" value="LIAS_N"/>
    <property type="match status" value="1"/>
</dbReference>
<dbReference type="Pfam" id="PF04055">
    <property type="entry name" value="Radical_SAM"/>
    <property type="match status" value="1"/>
</dbReference>
<dbReference type="PIRSF" id="PIRSF005963">
    <property type="entry name" value="Lipoyl_synth"/>
    <property type="match status" value="1"/>
</dbReference>
<dbReference type="SFLD" id="SFLDF00271">
    <property type="entry name" value="lipoyl_synthase"/>
    <property type="match status" value="1"/>
</dbReference>
<dbReference type="SFLD" id="SFLDG01058">
    <property type="entry name" value="lipoyl_synthase_like"/>
    <property type="match status" value="1"/>
</dbReference>
<dbReference type="SMART" id="SM00729">
    <property type="entry name" value="Elp3"/>
    <property type="match status" value="1"/>
</dbReference>
<dbReference type="SUPFAM" id="SSF102114">
    <property type="entry name" value="Radical SAM enzymes"/>
    <property type="match status" value="1"/>
</dbReference>
<dbReference type="PROSITE" id="PS51918">
    <property type="entry name" value="RADICAL_SAM"/>
    <property type="match status" value="1"/>
</dbReference>